<reference key="1">
    <citation type="journal article" date="2006" name="BMC Genomics">
        <title>Complete genome sequence of Shigella flexneri 5b and comparison with Shigella flexneri 2a.</title>
        <authorList>
            <person name="Nie H."/>
            <person name="Yang F."/>
            <person name="Zhang X."/>
            <person name="Yang J."/>
            <person name="Chen L."/>
            <person name="Wang J."/>
            <person name="Xiong Z."/>
            <person name="Peng J."/>
            <person name="Sun L."/>
            <person name="Dong J."/>
            <person name="Xue Y."/>
            <person name="Xu X."/>
            <person name="Chen S."/>
            <person name="Yao Z."/>
            <person name="Shen Y."/>
            <person name="Jin Q."/>
        </authorList>
    </citation>
    <scope>NUCLEOTIDE SEQUENCE [LARGE SCALE GENOMIC DNA]</scope>
    <source>
        <strain>8401</strain>
    </source>
</reference>
<feature type="chain" id="PRO_0000335665" description="Acetylglutamate kinase">
    <location>
        <begin position="1"/>
        <end position="258"/>
    </location>
</feature>
<feature type="binding site" evidence="1">
    <location>
        <begin position="44"/>
        <end position="45"/>
    </location>
    <ligand>
        <name>substrate</name>
    </ligand>
</feature>
<feature type="binding site" evidence="1">
    <location>
        <position position="66"/>
    </location>
    <ligand>
        <name>substrate</name>
    </ligand>
</feature>
<feature type="binding site" evidence="1">
    <location>
        <position position="158"/>
    </location>
    <ligand>
        <name>substrate</name>
    </ligand>
</feature>
<feature type="binding site" evidence="1">
    <location>
        <begin position="181"/>
        <end position="186"/>
    </location>
    <ligand>
        <name>ATP</name>
        <dbReference type="ChEBI" id="CHEBI:30616"/>
    </ligand>
</feature>
<feature type="binding site" evidence="1">
    <location>
        <begin position="209"/>
        <end position="211"/>
    </location>
    <ligand>
        <name>ATP</name>
        <dbReference type="ChEBI" id="CHEBI:30616"/>
    </ligand>
</feature>
<feature type="site" description="Transition state stabilizer" evidence="1">
    <location>
        <position position="8"/>
    </location>
</feature>
<feature type="site" description="Transition state stabilizer" evidence="1">
    <location>
        <position position="217"/>
    </location>
</feature>
<protein>
    <recommendedName>
        <fullName evidence="1">Acetylglutamate kinase</fullName>
        <ecNumber evidence="1">2.7.2.8</ecNumber>
    </recommendedName>
    <alternativeName>
        <fullName evidence="1">N-acetyl-L-glutamate 5-phosphotransferase</fullName>
    </alternativeName>
    <alternativeName>
        <fullName evidence="1">NAG kinase</fullName>
        <shortName evidence="1">NAGK</shortName>
    </alternativeName>
</protein>
<organism>
    <name type="scientific">Shigella flexneri serotype 5b (strain 8401)</name>
    <dbReference type="NCBI Taxonomy" id="373384"/>
    <lineage>
        <taxon>Bacteria</taxon>
        <taxon>Pseudomonadati</taxon>
        <taxon>Pseudomonadota</taxon>
        <taxon>Gammaproteobacteria</taxon>
        <taxon>Enterobacterales</taxon>
        <taxon>Enterobacteriaceae</taxon>
        <taxon>Shigella</taxon>
    </lineage>
</organism>
<name>ARGB_SHIF8</name>
<sequence>MMNPLIIKLGGVLLDSEEALERLFSALVNYRESHQRPLVIVHGGGCVVDELMKGLNLPVKKKNGLRVTPADQIDIITGALAGTANKTLLAWAKKHQIAAVGLFLGDGDSVKVTQLDEEFGHVGLAQPGSPKLINSLLENGYLPVVSSIGVTDEGQLMNVNADQAATALAATLGADLILLSDVSGILDGKGQRIAEMTAAKAEQLIEQGIITDGMIVKVNAALDAARTLGRPVDIASWRYAEQLPALFNGMPMGTRILA</sequence>
<dbReference type="EC" id="2.7.2.8" evidence="1"/>
<dbReference type="EMBL" id="CP000266">
    <property type="protein sequence ID" value="ABF06030.1"/>
    <property type="status" value="ALT_INIT"/>
    <property type="molecule type" value="Genomic_DNA"/>
</dbReference>
<dbReference type="SMR" id="Q0SY35"/>
<dbReference type="KEGG" id="sfv:SFV_4028"/>
<dbReference type="HOGENOM" id="CLU_053680_1_1_6"/>
<dbReference type="UniPathway" id="UPA00068">
    <property type="reaction ID" value="UER00107"/>
</dbReference>
<dbReference type="Proteomes" id="UP000000659">
    <property type="component" value="Chromosome"/>
</dbReference>
<dbReference type="GO" id="GO:0005737">
    <property type="term" value="C:cytoplasm"/>
    <property type="evidence" value="ECO:0007669"/>
    <property type="project" value="UniProtKB-SubCell"/>
</dbReference>
<dbReference type="GO" id="GO:0003991">
    <property type="term" value="F:acetylglutamate kinase activity"/>
    <property type="evidence" value="ECO:0007669"/>
    <property type="project" value="UniProtKB-UniRule"/>
</dbReference>
<dbReference type="GO" id="GO:0005524">
    <property type="term" value="F:ATP binding"/>
    <property type="evidence" value="ECO:0007669"/>
    <property type="project" value="UniProtKB-UniRule"/>
</dbReference>
<dbReference type="GO" id="GO:0042450">
    <property type="term" value="P:arginine biosynthetic process via ornithine"/>
    <property type="evidence" value="ECO:0007669"/>
    <property type="project" value="UniProtKB-UniRule"/>
</dbReference>
<dbReference type="GO" id="GO:0006526">
    <property type="term" value="P:L-arginine biosynthetic process"/>
    <property type="evidence" value="ECO:0007669"/>
    <property type="project" value="UniProtKB-UniPathway"/>
</dbReference>
<dbReference type="CDD" id="cd04249">
    <property type="entry name" value="AAK_NAGK-NC"/>
    <property type="match status" value="1"/>
</dbReference>
<dbReference type="FunFam" id="3.40.1160.10:FF:000008">
    <property type="entry name" value="Acetylglutamate kinase"/>
    <property type="match status" value="1"/>
</dbReference>
<dbReference type="Gene3D" id="3.40.1160.10">
    <property type="entry name" value="Acetylglutamate kinase-like"/>
    <property type="match status" value="1"/>
</dbReference>
<dbReference type="HAMAP" id="MF_00082">
    <property type="entry name" value="ArgB"/>
    <property type="match status" value="1"/>
</dbReference>
<dbReference type="InterPro" id="IPR036393">
    <property type="entry name" value="AceGlu_kinase-like_sf"/>
</dbReference>
<dbReference type="InterPro" id="IPR004662">
    <property type="entry name" value="AcgluKinase_fam"/>
</dbReference>
<dbReference type="InterPro" id="IPR037528">
    <property type="entry name" value="ArgB"/>
</dbReference>
<dbReference type="InterPro" id="IPR001048">
    <property type="entry name" value="Asp/Glu/Uridylate_kinase"/>
</dbReference>
<dbReference type="InterPro" id="IPR041731">
    <property type="entry name" value="NAGK-NC"/>
</dbReference>
<dbReference type="NCBIfam" id="TIGR00761">
    <property type="entry name" value="argB"/>
    <property type="match status" value="1"/>
</dbReference>
<dbReference type="PANTHER" id="PTHR23342">
    <property type="entry name" value="N-ACETYLGLUTAMATE SYNTHASE"/>
    <property type="match status" value="1"/>
</dbReference>
<dbReference type="PANTHER" id="PTHR23342:SF0">
    <property type="entry name" value="N-ACETYLGLUTAMATE SYNTHASE, MITOCHONDRIAL"/>
    <property type="match status" value="1"/>
</dbReference>
<dbReference type="Pfam" id="PF00696">
    <property type="entry name" value="AA_kinase"/>
    <property type="match status" value="1"/>
</dbReference>
<dbReference type="PIRSF" id="PIRSF000728">
    <property type="entry name" value="NAGK"/>
    <property type="match status" value="1"/>
</dbReference>
<dbReference type="SUPFAM" id="SSF53633">
    <property type="entry name" value="Carbamate kinase-like"/>
    <property type="match status" value="1"/>
</dbReference>
<keyword id="KW-0028">Amino-acid biosynthesis</keyword>
<keyword id="KW-0055">Arginine biosynthesis</keyword>
<keyword id="KW-0067">ATP-binding</keyword>
<keyword id="KW-0963">Cytoplasm</keyword>
<keyword id="KW-0418">Kinase</keyword>
<keyword id="KW-0547">Nucleotide-binding</keyword>
<keyword id="KW-0808">Transferase</keyword>
<comment type="function">
    <text evidence="1">Catalyzes the ATP-dependent phosphorylation of N-acetyl-L-glutamate.</text>
</comment>
<comment type="catalytic activity">
    <reaction evidence="1">
        <text>N-acetyl-L-glutamate + ATP = N-acetyl-L-glutamyl 5-phosphate + ADP</text>
        <dbReference type="Rhea" id="RHEA:14629"/>
        <dbReference type="ChEBI" id="CHEBI:30616"/>
        <dbReference type="ChEBI" id="CHEBI:44337"/>
        <dbReference type="ChEBI" id="CHEBI:57936"/>
        <dbReference type="ChEBI" id="CHEBI:456216"/>
        <dbReference type="EC" id="2.7.2.8"/>
    </reaction>
</comment>
<comment type="pathway">
    <text evidence="1">Amino-acid biosynthesis; L-arginine biosynthesis; N(2)-acetyl-L-ornithine from L-glutamate: step 2/4.</text>
</comment>
<comment type="subunit">
    <text evidence="1">Homodimer.</text>
</comment>
<comment type="subcellular location">
    <subcellularLocation>
        <location evidence="1">Cytoplasm</location>
    </subcellularLocation>
</comment>
<comment type="similarity">
    <text evidence="1">Belongs to the acetylglutamate kinase family. ArgB subfamily.</text>
</comment>
<comment type="sequence caution" evidence="2">
    <conflict type="erroneous initiation">
        <sequence resource="EMBL-CDS" id="ABF06030"/>
    </conflict>
</comment>
<gene>
    <name evidence="1" type="primary">argB</name>
    <name type="ordered locus">SFV_4028</name>
</gene>
<accession>Q0SY35</accession>
<proteinExistence type="inferred from homology"/>
<evidence type="ECO:0000255" key="1">
    <source>
        <dbReference type="HAMAP-Rule" id="MF_00082"/>
    </source>
</evidence>
<evidence type="ECO:0000305" key="2"/>